<protein>
    <recommendedName>
        <fullName evidence="1">UDP-2,3-diacylglucosamine hydrolase</fullName>
        <ecNumber evidence="1">3.6.1.54</ecNumber>
    </recommendedName>
    <alternativeName>
        <fullName evidence="1">UDP-2,3-diacylglucosamine diphosphatase</fullName>
    </alternativeName>
</protein>
<dbReference type="EC" id="3.6.1.54" evidence="1"/>
<dbReference type="EMBL" id="CP000510">
    <property type="protein sequence ID" value="ABM03927.1"/>
    <property type="molecule type" value="Genomic_DNA"/>
</dbReference>
<dbReference type="RefSeq" id="WP_011770487.1">
    <property type="nucleotide sequence ID" value="NC_008709.1"/>
</dbReference>
<dbReference type="SMR" id="A1SWR2"/>
<dbReference type="STRING" id="357804.Ping_2186"/>
<dbReference type="KEGG" id="pin:Ping_2186"/>
<dbReference type="eggNOG" id="COG2908">
    <property type="taxonomic scope" value="Bacteria"/>
</dbReference>
<dbReference type="HOGENOM" id="CLU_074586_0_0_6"/>
<dbReference type="OrthoDB" id="9783283at2"/>
<dbReference type="UniPathway" id="UPA00359">
    <property type="reaction ID" value="UER00480"/>
</dbReference>
<dbReference type="Proteomes" id="UP000000639">
    <property type="component" value="Chromosome"/>
</dbReference>
<dbReference type="GO" id="GO:0005737">
    <property type="term" value="C:cytoplasm"/>
    <property type="evidence" value="ECO:0007669"/>
    <property type="project" value="InterPro"/>
</dbReference>
<dbReference type="GO" id="GO:0019897">
    <property type="term" value="C:extrinsic component of plasma membrane"/>
    <property type="evidence" value="ECO:0007669"/>
    <property type="project" value="UniProtKB-UniRule"/>
</dbReference>
<dbReference type="GO" id="GO:0030145">
    <property type="term" value="F:manganese ion binding"/>
    <property type="evidence" value="ECO:0007669"/>
    <property type="project" value="UniProtKB-UniRule"/>
</dbReference>
<dbReference type="GO" id="GO:0008758">
    <property type="term" value="F:UDP-2,3-diacylglucosamine hydrolase activity"/>
    <property type="evidence" value="ECO:0007669"/>
    <property type="project" value="UniProtKB-UniRule"/>
</dbReference>
<dbReference type="GO" id="GO:0009245">
    <property type="term" value="P:lipid A biosynthetic process"/>
    <property type="evidence" value="ECO:0007669"/>
    <property type="project" value="UniProtKB-UniRule"/>
</dbReference>
<dbReference type="CDD" id="cd07398">
    <property type="entry name" value="MPP_YbbF-LpxH"/>
    <property type="match status" value="1"/>
</dbReference>
<dbReference type="Gene3D" id="3.60.21.10">
    <property type="match status" value="1"/>
</dbReference>
<dbReference type="HAMAP" id="MF_00575">
    <property type="entry name" value="LpxH"/>
    <property type="match status" value="1"/>
</dbReference>
<dbReference type="InterPro" id="IPR004843">
    <property type="entry name" value="Calcineurin-like_PHP_ApaH"/>
</dbReference>
<dbReference type="InterPro" id="IPR043461">
    <property type="entry name" value="LpxH-like"/>
</dbReference>
<dbReference type="InterPro" id="IPR029052">
    <property type="entry name" value="Metallo-depent_PP-like"/>
</dbReference>
<dbReference type="InterPro" id="IPR010138">
    <property type="entry name" value="UDP-diacylglucosamine_Hdrlase"/>
</dbReference>
<dbReference type="NCBIfam" id="TIGR01854">
    <property type="entry name" value="lipid_A_lpxH"/>
    <property type="match status" value="1"/>
</dbReference>
<dbReference type="NCBIfam" id="NF003743">
    <property type="entry name" value="PRK05340.1"/>
    <property type="match status" value="1"/>
</dbReference>
<dbReference type="PANTHER" id="PTHR34990:SF1">
    <property type="entry name" value="UDP-2,3-DIACYLGLUCOSAMINE HYDROLASE"/>
    <property type="match status" value="1"/>
</dbReference>
<dbReference type="PANTHER" id="PTHR34990">
    <property type="entry name" value="UDP-2,3-DIACYLGLUCOSAMINE HYDROLASE-RELATED"/>
    <property type="match status" value="1"/>
</dbReference>
<dbReference type="Pfam" id="PF00149">
    <property type="entry name" value="Metallophos"/>
    <property type="match status" value="1"/>
</dbReference>
<dbReference type="SUPFAM" id="SSF56300">
    <property type="entry name" value="Metallo-dependent phosphatases"/>
    <property type="match status" value="1"/>
</dbReference>
<name>LPXH_PSYIN</name>
<comment type="function">
    <text evidence="1">Hydrolyzes the pyrophosphate bond of UDP-2,3-diacylglucosamine to yield 2,3-diacylglucosamine 1-phosphate (lipid X) and UMP by catalyzing the attack of water at the alpha-P atom. Involved in the biosynthesis of lipid A, a phosphorylated glycolipid that anchors the lipopolysaccharide to the outer membrane of the cell.</text>
</comment>
<comment type="catalytic activity">
    <reaction evidence="1">
        <text>UDP-2-N,3-O-bis[(3R)-3-hydroxytetradecanoyl]-alpha-D-glucosamine + H2O = 2-N,3-O-bis[(3R)-3-hydroxytetradecanoyl]-alpha-D-glucosaminyl 1-phosphate + UMP + 2 H(+)</text>
        <dbReference type="Rhea" id="RHEA:25213"/>
        <dbReference type="ChEBI" id="CHEBI:15377"/>
        <dbReference type="ChEBI" id="CHEBI:15378"/>
        <dbReference type="ChEBI" id="CHEBI:57865"/>
        <dbReference type="ChEBI" id="CHEBI:57957"/>
        <dbReference type="ChEBI" id="CHEBI:78847"/>
        <dbReference type="EC" id="3.6.1.54"/>
    </reaction>
</comment>
<comment type="cofactor">
    <cofactor evidence="1">
        <name>Mn(2+)</name>
        <dbReference type="ChEBI" id="CHEBI:29035"/>
    </cofactor>
    <text evidence="1">Binds 2 Mn(2+) ions per subunit in a binuclear metal center.</text>
</comment>
<comment type="pathway">
    <text evidence="1">Glycolipid biosynthesis; lipid IV(A) biosynthesis; lipid IV(A) from (3R)-3-hydroxytetradecanoyl-[acyl-carrier-protein] and UDP-N-acetyl-alpha-D-glucosamine: step 4/6.</text>
</comment>
<comment type="subcellular location">
    <subcellularLocation>
        <location evidence="1">Cell inner membrane</location>
        <topology evidence="1">Peripheral membrane protein</topology>
        <orientation evidence="1">Cytoplasmic side</orientation>
    </subcellularLocation>
</comment>
<comment type="similarity">
    <text evidence="1">Belongs to the LpxH family.</text>
</comment>
<gene>
    <name evidence="1" type="primary">lpxH</name>
    <name type="ordered locus">Ping_2186</name>
</gene>
<reference key="1">
    <citation type="journal article" date="2008" name="BMC Genomics">
        <title>Genomics of an extreme psychrophile, Psychromonas ingrahamii.</title>
        <authorList>
            <person name="Riley M."/>
            <person name="Staley J.T."/>
            <person name="Danchin A."/>
            <person name="Wang T.Z."/>
            <person name="Brettin T.S."/>
            <person name="Hauser L.J."/>
            <person name="Land M.L."/>
            <person name="Thompson L.S."/>
        </authorList>
    </citation>
    <scope>NUCLEOTIDE SEQUENCE [LARGE SCALE GENOMIC DNA]</scope>
    <source>
        <strain>DSM 17664 / CCUG 51855 / 37</strain>
    </source>
</reference>
<organism>
    <name type="scientific">Psychromonas ingrahamii (strain DSM 17664 / CCUG 51855 / 37)</name>
    <dbReference type="NCBI Taxonomy" id="357804"/>
    <lineage>
        <taxon>Bacteria</taxon>
        <taxon>Pseudomonadati</taxon>
        <taxon>Pseudomonadota</taxon>
        <taxon>Gammaproteobacteria</taxon>
        <taxon>Alteromonadales</taxon>
        <taxon>Psychromonadaceae</taxon>
        <taxon>Psychromonas</taxon>
    </lineage>
</organism>
<evidence type="ECO:0000255" key="1">
    <source>
        <dbReference type="HAMAP-Rule" id="MF_00575"/>
    </source>
</evidence>
<sequence>MRTLFIADLHLSEKHPQISHAFFEFLQNETENVDALYILGDLFEVWIGDDERTLLMNEVALKLSEYALKNNILLYYIHGNRDFMIGKKYAKQSSMQLLPEHCEINLYGKKILILHGDTLCLADKNYQKMRTLLHNPLIQLVFNLLPLFLRKKIGWKIRHASQSKKVYKNREVMDVTKDEVVRLMEKHHVQTLIHGHTHRVACHEMLVKGQAAQRYDVGDWRHNLSYVEVQKDKINLVIRPINFYN</sequence>
<keyword id="KW-0997">Cell inner membrane</keyword>
<keyword id="KW-1003">Cell membrane</keyword>
<keyword id="KW-0378">Hydrolase</keyword>
<keyword id="KW-0441">Lipid A biosynthesis</keyword>
<keyword id="KW-0444">Lipid biosynthesis</keyword>
<keyword id="KW-0443">Lipid metabolism</keyword>
<keyword id="KW-0464">Manganese</keyword>
<keyword id="KW-0472">Membrane</keyword>
<keyword id="KW-0479">Metal-binding</keyword>
<keyword id="KW-1185">Reference proteome</keyword>
<feature type="chain" id="PRO_1000025077" description="UDP-2,3-diacylglucosamine hydrolase">
    <location>
        <begin position="1"/>
        <end position="245"/>
    </location>
</feature>
<feature type="binding site" evidence="1">
    <location>
        <position position="8"/>
    </location>
    <ligand>
        <name>Mn(2+)</name>
        <dbReference type="ChEBI" id="CHEBI:29035"/>
        <label>1</label>
    </ligand>
</feature>
<feature type="binding site" evidence="1">
    <location>
        <position position="10"/>
    </location>
    <ligand>
        <name>Mn(2+)</name>
        <dbReference type="ChEBI" id="CHEBI:29035"/>
        <label>1</label>
    </ligand>
</feature>
<feature type="binding site" evidence="1">
    <location>
        <position position="41"/>
    </location>
    <ligand>
        <name>Mn(2+)</name>
        <dbReference type="ChEBI" id="CHEBI:29035"/>
        <label>1</label>
    </ligand>
</feature>
<feature type="binding site" evidence="1">
    <location>
        <position position="41"/>
    </location>
    <ligand>
        <name>Mn(2+)</name>
        <dbReference type="ChEBI" id="CHEBI:29035"/>
        <label>2</label>
    </ligand>
</feature>
<feature type="binding site" evidence="1">
    <location>
        <begin position="80"/>
        <end position="81"/>
    </location>
    <ligand>
        <name>substrate</name>
    </ligand>
</feature>
<feature type="binding site" evidence="1">
    <location>
        <position position="80"/>
    </location>
    <ligand>
        <name>Mn(2+)</name>
        <dbReference type="ChEBI" id="CHEBI:29035"/>
        <label>2</label>
    </ligand>
</feature>
<feature type="binding site" evidence="1">
    <location>
        <position position="115"/>
    </location>
    <ligand>
        <name>Mn(2+)</name>
        <dbReference type="ChEBI" id="CHEBI:29035"/>
        <label>2</label>
    </ligand>
</feature>
<feature type="binding site" evidence="1">
    <location>
        <position position="123"/>
    </location>
    <ligand>
        <name>substrate</name>
    </ligand>
</feature>
<feature type="binding site" evidence="1">
    <location>
        <position position="161"/>
    </location>
    <ligand>
        <name>substrate</name>
    </ligand>
</feature>
<feature type="binding site" evidence="1">
    <location>
        <position position="165"/>
    </location>
    <ligand>
        <name>substrate</name>
    </ligand>
</feature>
<feature type="binding site" evidence="1">
    <location>
        <position position="168"/>
    </location>
    <ligand>
        <name>substrate</name>
    </ligand>
</feature>
<feature type="binding site" evidence="1">
    <location>
        <position position="196"/>
    </location>
    <ligand>
        <name>Mn(2+)</name>
        <dbReference type="ChEBI" id="CHEBI:29035"/>
        <label>2</label>
    </ligand>
</feature>
<feature type="binding site" evidence="1">
    <location>
        <position position="196"/>
    </location>
    <ligand>
        <name>substrate</name>
    </ligand>
</feature>
<feature type="binding site" evidence="1">
    <location>
        <position position="198"/>
    </location>
    <ligand>
        <name>Mn(2+)</name>
        <dbReference type="ChEBI" id="CHEBI:29035"/>
        <label>1</label>
    </ligand>
</feature>
<accession>A1SWR2</accession>
<proteinExistence type="inferred from homology"/>